<sequence>MSTSVDLSSYRDQHFKGSRSEQERSLRDSTTLYVGNLSFYTTEEQIHELFSRCGDVRVIVMGLDKYKKTPCGFCFVEYYTRAEAEAAMRFVNGTRLDDRLIRVDWDAGFIEGRQYGRGKTGGQVRDEYRTDYDAGRGGYGKLLSQKIAPNTDNR</sequence>
<comment type="function">
    <text evidence="1">Component of the cap-binding complex (CBC), which binds co-transcriptionally to the 5' cap of pre-mRNAs and is involved in various processes such as pre-mRNA splicing and RNA-mediated gene silencing (RNAi). The CBC complex is involved in miRNA-mediated RNA interference via its interaction with Ars2 and is required for primary microRNAs (miRNAs) processing. Also involved in innate immunity via the short interfering RNAs (siRNAs) processing machinery by restricting the viral RNA production. In the CBC complex, Cbp20 recognizes and binds capped RNAs (m7GpppG-capped RNA) but requires Cbp80 to stabilize the movement of its N-terminal loop and lock the CBC into a high affinity cap-binding state with the cap structure (By similarity).</text>
</comment>
<comment type="subunit">
    <text evidence="1">Component of the nuclear cap-binding complex (CBC), a heterodimer composed of Cbp80 and Cbp20 that interacts with m7GpppG-capped RNA. Interacts with Ars2 (By similarity).</text>
</comment>
<comment type="subcellular location">
    <subcellularLocation>
        <location evidence="1">Nucleus</location>
    </subcellularLocation>
</comment>
<comment type="similarity">
    <text evidence="4">Belongs to the RRM NCBP2 family.</text>
</comment>
<reference key="1">
    <citation type="journal article" date="2007" name="Nature">
        <title>Evolution of genes and genomes on the Drosophila phylogeny.</title>
        <authorList>
            <consortium name="Drosophila 12 genomes consortium"/>
        </authorList>
    </citation>
    <scope>NUCLEOTIDE SEQUENCE [LARGE SCALE GENOMIC DNA]</scope>
    <source>
        <strain>Tucson 14024-0371.13</strain>
    </source>
</reference>
<organism>
    <name type="scientific">Drosophila ananassae</name>
    <name type="common">Fruit fly</name>
    <dbReference type="NCBI Taxonomy" id="7217"/>
    <lineage>
        <taxon>Eukaryota</taxon>
        <taxon>Metazoa</taxon>
        <taxon>Ecdysozoa</taxon>
        <taxon>Arthropoda</taxon>
        <taxon>Hexapoda</taxon>
        <taxon>Insecta</taxon>
        <taxon>Pterygota</taxon>
        <taxon>Neoptera</taxon>
        <taxon>Endopterygota</taxon>
        <taxon>Diptera</taxon>
        <taxon>Brachycera</taxon>
        <taxon>Muscomorpha</taxon>
        <taxon>Ephydroidea</taxon>
        <taxon>Drosophilidae</taxon>
        <taxon>Drosophila</taxon>
        <taxon>Sophophora</taxon>
    </lineage>
</organism>
<accession>B3LYP1</accession>
<evidence type="ECO:0000250" key="1"/>
<evidence type="ECO:0000255" key="2">
    <source>
        <dbReference type="PROSITE-ProRule" id="PRU00176"/>
    </source>
</evidence>
<evidence type="ECO:0000256" key="3">
    <source>
        <dbReference type="SAM" id="MobiDB-lite"/>
    </source>
</evidence>
<evidence type="ECO:0000305" key="4"/>
<protein>
    <recommendedName>
        <fullName>Nuclear cap-binding protein subunit 2</fullName>
    </recommendedName>
    <alternativeName>
        <fullName>20 kDa nuclear cap-binding protein</fullName>
    </alternativeName>
    <alternativeName>
        <fullName>NCBP 20 kDa subunit</fullName>
        <shortName>CBP20</shortName>
    </alternativeName>
</protein>
<proteinExistence type="inferred from homology"/>
<keyword id="KW-0507">mRNA processing</keyword>
<keyword id="KW-0508">mRNA splicing</keyword>
<keyword id="KW-0539">Nucleus</keyword>
<keyword id="KW-1185">Reference proteome</keyword>
<keyword id="KW-0694">RNA-binding</keyword>
<keyword id="KW-0943">RNA-mediated gene silencing</keyword>
<feature type="chain" id="PRO_0000385263" description="Nuclear cap-binding protein subunit 2">
    <location>
        <begin position="1"/>
        <end position="154"/>
    </location>
</feature>
<feature type="domain" description="RRM" evidence="2">
    <location>
        <begin position="30"/>
        <end position="108"/>
    </location>
</feature>
<feature type="region of interest" description="Disordered" evidence="3">
    <location>
        <begin position="1"/>
        <end position="23"/>
    </location>
</feature>
<feature type="compositionally biased region" description="Basic and acidic residues" evidence="3">
    <location>
        <begin position="9"/>
        <end position="23"/>
    </location>
</feature>
<feature type="binding site" evidence="1">
    <location>
        <position position="10"/>
    </location>
    <ligand>
        <name>mRNA</name>
        <dbReference type="ChEBI" id="CHEBI:33699"/>
    </ligand>
    <ligandPart>
        <name>mRNA cap</name>
    </ligandPart>
</feature>
<feature type="binding site" evidence="1">
    <location>
        <position position="33"/>
    </location>
    <ligand>
        <name>mRNA</name>
        <dbReference type="ChEBI" id="CHEBI:33699"/>
    </ligand>
    <ligandPart>
        <name>mRNA cap</name>
    </ligandPart>
</feature>
<feature type="binding site" evidence="1">
    <location>
        <begin position="102"/>
        <end position="106"/>
    </location>
    <ligand>
        <name>mRNA</name>
        <dbReference type="ChEBI" id="CHEBI:33699"/>
    </ligand>
    <ligandPart>
        <name>mRNA cap</name>
    </ligandPart>
</feature>
<feature type="binding site" evidence="1">
    <location>
        <begin position="113"/>
        <end position="117"/>
    </location>
    <ligand>
        <name>mRNA</name>
        <dbReference type="ChEBI" id="CHEBI:33699"/>
    </ligand>
    <ligandPart>
        <name>mRNA cap</name>
    </ligandPart>
</feature>
<feature type="binding site" evidence="1">
    <location>
        <begin position="123"/>
        <end position="124"/>
    </location>
    <ligand>
        <name>mRNA</name>
        <dbReference type="ChEBI" id="CHEBI:33699"/>
    </ligand>
    <ligandPart>
        <name>mRNA cap</name>
    </ligandPart>
</feature>
<name>NCBP2_DROAN</name>
<gene>
    <name type="primary">Cbp20</name>
    <name type="ORF">GF16759</name>
</gene>
<dbReference type="EMBL" id="CH902617">
    <property type="protein sequence ID" value="EDV42956.1"/>
    <property type="molecule type" value="Genomic_DNA"/>
</dbReference>
<dbReference type="SMR" id="B3LYP1"/>
<dbReference type="FunCoup" id="B3LYP1">
    <property type="interactions" value="2180"/>
</dbReference>
<dbReference type="STRING" id="7217.B3LYP1"/>
<dbReference type="EnsemblMetazoa" id="FBtr0121459">
    <property type="protein sequence ID" value="FBpp0119951"/>
    <property type="gene ID" value="FBgn0093780"/>
</dbReference>
<dbReference type="EnsemblMetazoa" id="XM_001954359.4">
    <property type="protein sequence ID" value="XP_001954395.1"/>
    <property type="gene ID" value="LOC6499553"/>
</dbReference>
<dbReference type="GeneID" id="6499553"/>
<dbReference type="KEGG" id="dan:6499553"/>
<dbReference type="CTD" id="42166"/>
<dbReference type="eggNOG" id="KOG0121">
    <property type="taxonomic scope" value="Eukaryota"/>
</dbReference>
<dbReference type="HOGENOM" id="CLU_070952_2_0_1"/>
<dbReference type="InParanoid" id="B3LYP1"/>
<dbReference type="OMA" id="DIRRIIM"/>
<dbReference type="OrthoDB" id="201398at2759"/>
<dbReference type="PhylomeDB" id="B3LYP1"/>
<dbReference type="Proteomes" id="UP000007801">
    <property type="component" value="Unassembled WGS sequence"/>
</dbReference>
<dbReference type="GO" id="GO:0005846">
    <property type="term" value="C:nuclear cap binding complex"/>
    <property type="evidence" value="ECO:0007669"/>
    <property type="project" value="InterPro"/>
</dbReference>
<dbReference type="GO" id="GO:0005634">
    <property type="term" value="C:nucleus"/>
    <property type="evidence" value="ECO:0007669"/>
    <property type="project" value="UniProtKB-SubCell"/>
</dbReference>
<dbReference type="GO" id="GO:0099523">
    <property type="term" value="C:presynaptic cytosol"/>
    <property type="evidence" value="ECO:0007669"/>
    <property type="project" value="EnsemblMetazoa"/>
</dbReference>
<dbReference type="GO" id="GO:0000339">
    <property type="term" value="F:RNA cap binding"/>
    <property type="evidence" value="ECO:0007669"/>
    <property type="project" value="InterPro"/>
</dbReference>
<dbReference type="GO" id="GO:0045292">
    <property type="term" value="P:mRNA cis splicing, via spliceosome"/>
    <property type="evidence" value="ECO:0007669"/>
    <property type="project" value="InterPro"/>
</dbReference>
<dbReference type="GO" id="GO:0045071">
    <property type="term" value="P:negative regulation of viral genome replication"/>
    <property type="evidence" value="ECO:0007669"/>
    <property type="project" value="EnsemblMetazoa"/>
</dbReference>
<dbReference type="GO" id="GO:0031053">
    <property type="term" value="P:primary miRNA processing"/>
    <property type="evidence" value="ECO:0007669"/>
    <property type="project" value="EnsemblMetazoa"/>
</dbReference>
<dbReference type="GO" id="GO:0035194">
    <property type="term" value="P:regulatory ncRNA-mediated post-transcriptional gene silencing"/>
    <property type="evidence" value="ECO:0007669"/>
    <property type="project" value="EnsemblMetazoa"/>
</dbReference>
<dbReference type="GO" id="GO:0030422">
    <property type="term" value="P:siRNA processing"/>
    <property type="evidence" value="ECO:0007669"/>
    <property type="project" value="EnsemblMetazoa"/>
</dbReference>
<dbReference type="CDD" id="cd12240">
    <property type="entry name" value="RRM_NCBP2"/>
    <property type="match status" value="1"/>
</dbReference>
<dbReference type="FunFam" id="3.30.70.330:FF:000128">
    <property type="entry name" value="Nuclear cap-binding protein subunit 2"/>
    <property type="match status" value="1"/>
</dbReference>
<dbReference type="Gene3D" id="3.30.70.330">
    <property type="match status" value="1"/>
</dbReference>
<dbReference type="InterPro" id="IPR027157">
    <property type="entry name" value="NCBP2"/>
</dbReference>
<dbReference type="InterPro" id="IPR034148">
    <property type="entry name" value="NCBP2_RRM"/>
</dbReference>
<dbReference type="InterPro" id="IPR012677">
    <property type="entry name" value="Nucleotide-bd_a/b_plait_sf"/>
</dbReference>
<dbReference type="InterPro" id="IPR035979">
    <property type="entry name" value="RBD_domain_sf"/>
</dbReference>
<dbReference type="InterPro" id="IPR000504">
    <property type="entry name" value="RRM_dom"/>
</dbReference>
<dbReference type="PANTHER" id="PTHR18847">
    <property type="entry name" value="20 KD NUCLEAR CAP BINDING PROTEIN"/>
    <property type="match status" value="1"/>
</dbReference>
<dbReference type="PANTHER" id="PTHR18847:SF0">
    <property type="entry name" value="NUCLEAR CAP-BINDING PROTEIN SUBUNIT 2"/>
    <property type="match status" value="1"/>
</dbReference>
<dbReference type="Pfam" id="PF00076">
    <property type="entry name" value="RRM_1"/>
    <property type="match status" value="1"/>
</dbReference>
<dbReference type="SMART" id="SM00360">
    <property type="entry name" value="RRM"/>
    <property type="match status" value="1"/>
</dbReference>
<dbReference type="SUPFAM" id="SSF54928">
    <property type="entry name" value="RNA-binding domain, RBD"/>
    <property type="match status" value="1"/>
</dbReference>
<dbReference type="PROSITE" id="PS50102">
    <property type="entry name" value="RRM"/>
    <property type="match status" value="1"/>
</dbReference>